<sequence length="446" mass="46789">MTTQIRPFTTQSEALFARAQAVTPGGVNSPVRAFRSVGGTPRFIREAHGAYLTDMDGHRLLDYIGSWGPMILGHDHPAVREAVAAALDRGTSFGAPSEGEVRLAETVTRLTGVDRVRFVNSGTEATMSALRLARGFTGRTFIVKFRGNYHGHADGLLVEAGSGLMTNAAKTLGQAAPSSAGVPEEYARLTLVCEYNDPAALGALMQERGHDVAAVIFEPVVGNAGVLIPTPEFLAALHRVRDAGALLIADEVMTGFRLSLRGATGLLGLTPDLICWGKIIGGGLPVGAYGGRAEVMDFVSPQGPVYQAGTLSGNPLAMAAGLATLEVLESDPSIYARLETYTMQLAEGLRAAAQAAGVPLSVNQIGSMLTAFHQDAPVGSIRTYADAARSDTGAFAVWFQRMLAQGIYWAPSQFESIFVSAAHTDSDLNATLDAAHSAYAQLGGTA</sequence>
<evidence type="ECO:0000255" key="1">
    <source>
        <dbReference type="HAMAP-Rule" id="MF_00375"/>
    </source>
</evidence>
<evidence type="ECO:0000305" key="2"/>
<accession>Q1IWZ8</accession>
<proteinExistence type="inferred from homology"/>
<gene>
    <name evidence="1" type="primary">hemL</name>
    <name type="ordered locus">Dgeo_1942</name>
</gene>
<name>GSA_DEIGD</name>
<organism>
    <name type="scientific">Deinococcus geothermalis (strain DSM 11300 / CIP 105573 / AG-3a)</name>
    <dbReference type="NCBI Taxonomy" id="319795"/>
    <lineage>
        <taxon>Bacteria</taxon>
        <taxon>Thermotogati</taxon>
        <taxon>Deinococcota</taxon>
        <taxon>Deinococci</taxon>
        <taxon>Deinococcales</taxon>
        <taxon>Deinococcaceae</taxon>
        <taxon>Deinococcus</taxon>
    </lineage>
</organism>
<feature type="chain" id="PRO_0000382303" description="Glutamate-1-semialdehyde 2,1-aminomutase">
    <location>
        <begin position="1"/>
        <end position="446"/>
    </location>
</feature>
<feature type="modified residue" description="N6-(pyridoxal phosphate)lysine" evidence="1">
    <location>
        <position position="278"/>
    </location>
</feature>
<protein>
    <recommendedName>
        <fullName evidence="1">Glutamate-1-semialdehyde 2,1-aminomutase</fullName>
        <shortName evidence="1">GSA</shortName>
        <ecNumber evidence="1">5.4.3.8</ecNumber>
    </recommendedName>
    <alternativeName>
        <fullName evidence="1">Glutamate-1-semialdehyde aminotransferase</fullName>
        <shortName evidence="1">GSA-AT</shortName>
    </alternativeName>
</protein>
<keyword id="KW-0963">Cytoplasm</keyword>
<keyword id="KW-0413">Isomerase</keyword>
<keyword id="KW-0627">Porphyrin biosynthesis</keyword>
<keyword id="KW-0663">Pyridoxal phosphate</keyword>
<dbReference type="EC" id="5.4.3.8" evidence="1"/>
<dbReference type="EMBL" id="CP000359">
    <property type="protein sequence ID" value="ABF46236.1"/>
    <property type="status" value="ALT_INIT"/>
    <property type="molecule type" value="Genomic_DNA"/>
</dbReference>
<dbReference type="RefSeq" id="WP_041221353.1">
    <property type="nucleotide sequence ID" value="NC_008025.1"/>
</dbReference>
<dbReference type="SMR" id="Q1IWZ8"/>
<dbReference type="STRING" id="319795.Dgeo_1942"/>
<dbReference type="KEGG" id="dge:Dgeo_1942"/>
<dbReference type="eggNOG" id="COG0001">
    <property type="taxonomic scope" value="Bacteria"/>
</dbReference>
<dbReference type="HOGENOM" id="CLU_016922_1_5_0"/>
<dbReference type="UniPathway" id="UPA00251">
    <property type="reaction ID" value="UER00317"/>
</dbReference>
<dbReference type="Proteomes" id="UP000002431">
    <property type="component" value="Chromosome"/>
</dbReference>
<dbReference type="GO" id="GO:0005737">
    <property type="term" value="C:cytoplasm"/>
    <property type="evidence" value="ECO:0007669"/>
    <property type="project" value="UniProtKB-SubCell"/>
</dbReference>
<dbReference type="GO" id="GO:0042286">
    <property type="term" value="F:glutamate-1-semialdehyde 2,1-aminomutase activity"/>
    <property type="evidence" value="ECO:0007669"/>
    <property type="project" value="UniProtKB-UniRule"/>
</dbReference>
<dbReference type="GO" id="GO:0030170">
    <property type="term" value="F:pyridoxal phosphate binding"/>
    <property type="evidence" value="ECO:0007669"/>
    <property type="project" value="InterPro"/>
</dbReference>
<dbReference type="GO" id="GO:0008483">
    <property type="term" value="F:transaminase activity"/>
    <property type="evidence" value="ECO:0007669"/>
    <property type="project" value="InterPro"/>
</dbReference>
<dbReference type="GO" id="GO:0006782">
    <property type="term" value="P:protoporphyrinogen IX biosynthetic process"/>
    <property type="evidence" value="ECO:0007669"/>
    <property type="project" value="UniProtKB-UniRule"/>
</dbReference>
<dbReference type="CDD" id="cd00610">
    <property type="entry name" value="OAT_like"/>
    <property type="match status" value="1"/>
</dbReference>
<dbReference type="FunFam" id="3.40.640.10:FF:000021">
    <property type="entry name" value="Glutamate-1-semialdehyde 2,1-aminomutase"/>
    <property type="match status" value="1"/>
</dbReference>
<dbReference type="Gene3D" id="3.90.1150.10">
    <property type="entry name" value="Aspartate Aminotransferase, domain 1"/>
    <property type="match status" value="1"/>
</dbReference>
<dbReference type="Gene3D" id="3.40.640.10">
    <property type="entry name" value="Type I PLP-dependent aspartate aminotransferase-like (Major domain)"/>
    <property type="match status" value="1"/>
</dbReference>
<dbReference type="HAMAP" id="MF_00375">
    <property type="entry name" value="HemL_aminotrans_3"/>
    <property type="match status" value="1"/>
</dbReference>
<dbReference type="InterPro" id="IPR004639">
    <property type="entry name" value="4pyrrol_synth_GluAld_NH2Trfase"/>
</dbReference>
<dbReference type="InterPro" id="IPR005814">
    <property type="entry name" value="Aminotrans_3"/>
</dbReference>
<dbReference type="InterPro" id="IPR049704">
    <property type="entry name" value="Aminotrans_3_PPA_site"/>
</dbReference>
<dbReference type="InterPro" id="IPR015424">
    <property type="entry name" value="PyrdxlP-dep_Trfase"/>
</dbReference>
<dbReference type="InterPro" id="IPR015421">
    <property type="entry name" value="PyrdxlP-dep_Trfase_major"/>
</dbReference>
<dbReference type="InterPro" id="IPR015422">
    <property type="entry name" value="PyrdxlP-dep_Trfase_small"/>
</dbReference>
<dbReference type="NCBIfam" id="TIGR00713">
    <property type="entry name" value="hemL"/>
    <property type="match status" value="1"/>
</dbReference>
<dbReference type="NCBIfam" id="NF000818">
    <property type="entry name" value="PRK00062.1"/>
    <property type="match status" value="1"/>
</dbReference>
<dbReference type="PANTHER" id="PTHR43713">
    <property type="entry name" value="GLUTAMATE-1-SEMIALDEHYDE 2,1-AMINOMUTASE"/>
    <property type="match status" value="1"/>
</dbReference>
<dbReference type="PANTHER" id="PTHR43713:SF3">
    <property type="entry name" value="GLUTAMATE-1-SEMIALDEHYDE 2,1-AMINOMUTASE 1, CHLOROPLASTIC-RELATED"/>
    <property type="match status" value="1"/>
</dbReference>
<dbReference type="Pfam" id="PF00202">
    <property type="entry name" value="Aminotran_3"/>
    <property type="match status" value="1"/>
</dbReference>
<dbReference type="SUPFAM" id="SSF53383">
    <property type="entry name" value="PLP-dependent transferases"/>
    <property type="match status" value="1"/>
</dbReference>
<dbReference type="PROSITE" id="PS00600">
    <property type="entry name" value="AA_TRANSFER_CLASS_3"/>
    <property type="match status" value="1"/>
</dbReference>
<comment type="catalytic activity">
    <reaction evidence="1">
        <text>(S)-4-amino-5-oxopentanoate = 5-aminolevulinate</text>
        <dbReference type="Rhea" id="RHEA:14265"/>
        <dbReference type="ChEBI" id="CHEBI:57501"/>
        <dbReference type="ChEBI" id="CHEBI:356416"/>
        <dbReference type="EC" id="5.4.3.8"/>
    </reaction>
</comment>
<comment type="cofactor">
    <cofactor evidence="1">
        <name>pyridoxal 5'-phosphate</name>
        <dbReference type="ChEBI" id="CHEBI:597326"/>
    </cofactor>
</comment>
<comment type="pathway">
    <text evidence="1">Porphyrin-containing compound metabolism; protoporphyrin-IX biosynthesis; 5-aminolevulinate from L-glutamyl-tRNA(Glu): step 2/2.</text>
</comment>
<comment type="subunit">
    <text evidence="1">Homodimer.</text>
</comment>
<comment type="subcellular location">
    <subcellularLocation>
        <location evidence="1">Cytoplasm</location>
    </subcellularLocation>
</comment>
<comment type="similarity">
    <text evidence="1">Belongs to the class-III pyridoxal-phosphate-dependent aminotransferase family. HemL subfamily.</text>
</comment>
<comment type="sequence caution" evidence="2">
    <conflict type="erroneous initiation">
        <sequence resource="EMBL-CDS" id="ABF46236"/>
    </conflict>
</comment>
<reference key="1">
    <citation type="submission" date="2006-04" db="EMBL/GenBank/DDBJ databases">
        <title>Complete sequence of chromosome of Deinococcus geothermalis DSM 11300.</title>
        <authorList>
            <person name="Copeland A."/>
            <person name="Lucas S."/>
            <person name="Lapidus A."/>
            <person name="Barry K."/>
            <person name="Detter J.C."/>
            <person name="Glavina del Rio T."/>
            <person name="Hammon N."/>
            <person name="Israni S."/>
            <person name="Dalin E."/>
            <person name="Tice H."/>
            <person name="Pitluck S."/>
            <person name="Brettin T."/>
            <person name="Bruce D."/>
            <person name="Han C."/>
            <person name="Tapia R."/>
            <person name="Saunders E."/>
            <person name="Gilna P."/>
            <person name="Schmutz J."/>
            <person name="Larimer F."/>
            <person name="Land M."/>
            <person name="Hauser L."/>
            <person name="Kyrpides N."/>
            <person name="Kim E."/>
            <person name="Daly M.J."/>
            <person name="Fredrickson J.K."/>
            <person name="Makarova K.S."/>
            <person name="Gaidamakova E.K."/>
            <person name="Zhai M."/>
            <person name="Richardson P."/>
        </authorList>
    </citation>
    <scope>NUCLEOTIDE SEQUENCE [LARGE SCALE GENOMIC DNA]</scope>
    <source>
        <strain>DSM 11300 / CIP 105573 / AG-3a</strain>
    </source>
</reference>